<reference key="1">
    <citation type="submission" date="2008-06" db="EMBL/GenBank/DDBJ databases">
        <title>Complete sequence of chromosome of Prosthecochloris aestuarii DSM 271.</title>
        <authorList>
            <consortium name="US DOE Joint Genome Institute"/>
            <person name="Lucas S."/>
            <person name="Copeland A."/>
            <person name="Lapidus A."/>
            <person name="Glavina del Rio T."/>
            <person name="Dalin E."/>
            <person name="Tice H."/>
            <person name="Bruce D."/>
            <person name="Goodwin L."/>
            <person name="Pitluck S."/>
            <person name="Schmutz J."/>
            <person name="Larimer F."/>
            <person name="Land M."/>
            <person name="Hauser L."/>
            <person name="Kyrpides N."/>
            <person name="Anderson I."/>
            <person name="Liu Z."/>
            <person name="Li T."/>
            <person name="Zhao F."/>
            <person name="Overmann J."/>
            <person name="Bryant D.A."/>
            <person name="Richardson P."/>
        </authorList>
    </citation>
    <scope>NUCLEOTIDE SEQUENCE [LARGE SCALE GENOMIC DNA]</scope>
    <source>
        <strain>DSM 271 / SK 413</strain>
    </source>
</reference>
<gene>
    <name evidence="1" type="primary">pdaD</name>
    <name type="ordered locus">Paes_0705</name>
</gene>
<dbReference type="EC" id="4.1.1.19" evidence="1"/>
<dbReference type="EMBL" id="CP001108">
    <property type="protein sequence ID" value="ACF45752.1"/>
    <property type="molecule type" value="Genomic_DNA"/>
</dbReference>
<dbReference type="RefSeq" id="WP_012505289.1">
    <property type="nucleotide sequence ID" value="NC_011059.1"/>
</dbReference>
<dbReference type="SMR" id="B4S6J7"/>
<dbReference type="STRING" id="290512.Paes_0705"/>
<dbReference type="KEGG" id="paa:Paes_0705"/>
<dbReference type="eggNOG" id="COG1945">
    <property type="taxonomic scope" value="Bacteria"/>
</dbReference>
<dbReference type="HOGENOM" id="CLU_114389_0_0_10"/>
<dbReference type="Proteomes" id="UP000002725">
    <property type="component" value="Chromosome"/>
</dbReference>
<dbReference type="GO" id="GO:0008792">
    <property type="term" value="F:arginine decarboxylase activity"/>
    <property type="evidence" value="ECO:0007669"/>
    <property type="project" value="UniProtKB-UniRule"/>
</dbReference>
<dbReference type="GO" id="GO:0006527">
    <property type="term" value="P:arginine catabolic process"/>
    <property type="evidence" value="ECO:0007669"/>
    <property type="project" value="InterPro"/>
</dbReference>
<dbReference type="Gene3D" id="3.30.60.30">
    <property type="match status" value="1"/>
</dbReference>
<dbReference type="Gene3D" id="3.50.20.10">
    <property type="entry name" value="Pyruvoyl-Dependent Histidine Decarboxylase, subunit B"/>
    <property type="match status" value="1"/>
</dbReference>
<dbReference type="HAMAP" id="MF_01404">
    <property type="entry name" value="PvlArgDC"/>
    <property type="match status" value="1"/>
</dbReference>
<dbReference type="InterPro" id="IPR016104">
    <property type="entry name" value="Pyr-dep_his/arg-deCO2ase"/>
</dbReference>
<dbReference type="InterPro" id="IPR016105">
    <property type="entry name" value="Pyr-dep_his/arg-deCO2ase_sand"/>
</dbReference>
<dbReference type="InterPro" id="IPR002724">
    <property type="entry name" value="Pyruvoyl-dep_arg_deCO2ase"/>
</dbReference>
<dbReference type="NCBIfam" id="TIGR00286">
    <property type="entry name" value="pyruvoyl-dependent arginine decarboxylase"/>
    <property type="match status" value="1"/>
</dbReference>
<dbReference type="PANTHER" id="PTHR40438">
    <property type="entry name" value="PYRUVOYL-DEPENDENT ARGININE DECARBOXYLASE"/>
    <property type="match status" value="1"/>
</dbReference>
<dbReference type="PANTHER" id="PTHR40438:SF1">
    <property type="entry name" value="PYRUVOYL-DEPENDENT ARGININE DECARBOXYLASE"/>
    <property type="match status" value="1"/>
</dbReference>
<dbReference type="Pfam" id="PF01862">
    <property type="entry name" value="PvlArgDC"/>
    <property type="match status" value="1"/>
</dbReference>
<dbReference type="PIRSF" id="PIRSF005216">
    <property type="entry name" value="Pyruvoyl-dep_arg_deCO2ase"/>
    <property type="match status" value="1"/>
</dbReference>
<dbReference type="SFLD" id="SFLDG01170">
    <property type="entry name" value="Pyruvoyl-dependent_arginine_de"/>
    <property type="match status" value="1"/>
</dbReference>
<dbReference type="SFLD" id="SFLDS00055">
    <property type="entry name" value="Pyruvoyl-Dependent_Histidine/A"/>
    <property type="match status" value="1"/>
</dbReference>
<dbReference type="SUPFAM" id="SSF56271">
    <property type="entry name" value="Pyruvoyl-dependent histidine and arginine decarboxylases"/>
    <property type="match status" value="1"/>
</dbReference>
<protein>
    <recommendedName>
        <fullName evidence="1">Probable pyruvoyl-dependent arginine decarboxylase</fullName>
        <shortName evidence="1">PvlArgDC</shortName>
        <ecNumber evidence="1">4.1.1.19</ecNumber>
    </recommendedName>
    <component>
        <recommendedName>
            <fullName evidence="1">Pyruvoyl-dependent arginine decarboxylase subunit beta</fullName>
        </recommendedName>
    </component>
    <component>
        <recommendedName>
            <fullName evidence="1">Pyruvoyl-dependent arginine decarboxylase subunit alpha</fullName>
        </recommendedName>
    </component>
</protein>
<keyword id="KW-0210">Decarboxylase</keyword>
<keyword id="KW-0456">Lyase</keyword>
<keyword id="KW-0670">Pyruvate</keyword>
<sequence length="181" mass="19898">MSFVPTKVFFTKGVGRHKEYLSSFELALREAKIEKCNLVTVSSIFPPQCERISVEEGLKSLSPGEITFAVMARNSTNEHGRLIASSIGVALPADESVYGYLSEHHPYGQTEEQSGEYAEDLAATMLATTLGIEFDPNKDWDEREGIYKMSGKIINSFNITQSAEGQNGLWTTVIACAVLLP</sequence>
<evidence type="ECO:0000255" key="1">
    <source>
        <dbReference type="HAMAP-Rule" id="MF_01404"/>
    </source>
</evidence>
<name>PDAD_PROA2</name>
<comment type="catalytic activity">
    <reaction evidence="1">
        <text>L-arginine + H(+) = agmatine + CO2</text>
        <dbReference type="Rhea" id="RHEA:17641"/>
        <dbReference type="ChEBI" id="CHEBI:15378"/>
        <dbReference type="ChEBI" id="CHEBI:16526"/>
        <dbReference type="ChEBI" id="CHEBI:32682"/>
        <dbReference type="ChEBI" id="CHEBI:58145"/>
        <dbReference type="EC" id="4.1.1.19"/>
    </reaction>
</comment>
<comment type="cofactor">
    <cofactor evidence="1">
        <name>pyruvate</name>
        <dbReference type="ChEBI" id="CHEBI:15361"/>
    </cofactor>
    <text evidence="1">Binds 1 pyruvoyl group covalently per subunit.</text>
</comment>
<comment type="similarity">
    <text evidence="1">Belongs to the PdaD family.</text>
</comment>
<accession>B4S6J7</accession>
<organism>
    <name type="scientific">Prosthecochloris aestuarii (strain DSM 271 / SK 413)</name>
    <dbReference type="NCBI Taxonomy" id="290512"/>
    <lineage>
        <taxon>Bacteria</taxon>
        <taxon>Pseudomonadati</taxon>
        <taxon>Chlorobiota</taxon>
        <taxon>Chlorobiia</taxon>
        <taxon>Chlorobiales</taxon>
        <taxon>Chlorobiaceae</taxon>
        <taxon>Prosthecochloris</taxon>
    </lineage>
</organism>
<proteinExistence type="inferred from homology"/>
<feature type="chain" id="PRO_1000145474" description="Pyruvoyl-dependent arginine decarboxylase subunit beta" evidence="1">
    <location>
        <begin position="1"/>
        <end position="42"/>
    </location>
</feature>
<feature type="chain" id="PRO_1000145475" description="Pyruvoyl-dependent arginine decarboxylase subunit alpha" evidence="1">
    <location>
        <begin position="43"/>
        <end position="181"/>
    </location>
</feature>
<feature type="site" description="Cleavage (non-hydrolytic)" evidence="1">
    <location>
        <begin position="42"/>
        <end position="43"/>
    </location>
</feature>
<feature type="modified residue" description="Pyruvic acid (Ser)" evidence="1">
    <location>
        <position position="43"/>
    </location>
</feature>